<feature type="chain" id="PRO_0000369145" description="UPF0736 protein BLi01230/BL03322">
    <location>
        <begin position="1"/>
        <end position="250"/>
    </location>
</feature>
<accession>Q65LC6</accession>
<accession>Q62WR6</accession>
<reference key="1">
    <citation type="journal article" date="2004" name="J. Mol. Microbiol. Biotechnol.">
        <title>The complete genome sequence of Bacillus licheniformis DSM13, an organism with great industrial potential.</title>
        <authorList>
            <person name="Veith B."/>
            <person name="Herzberg C."/>
            <person name="Steckel S."/>
            <person name="Feesche J."/>
            <person name="Maurer K.H."/>
            <person name="Ehrenreich P."/>
            <person name="Baeumer S."/>
            <person name="Henne A."/>
            <person name="Liesegang H."/>
            <person name="Merkl R."/>
            <person name="Ehrenreich A."/>
            <person name="Gottschalk G."/>
        </authorList>
    </citation>
    <scope>NUCLEOTIDE SEQUENCE [LARGE SCALE GENOMIC DNA]</scope>
    <source>
        <strain>ATCC 14580 / DSM 13 / JCM 2505 / CCUG 7422 / NBRC 12200 / NCIMB 9375 / NCTC 10341 / NRRL NRS-1264 / Gibson 46</strain>
    </source>
</reference>
<reference key="2">
    <citation type="journal article" date="2004" name="Genome Biol.">
        <title>Complete genome sequence of the industrial bacterium Bacillus licheniformis and comparisons with closely related Bacillus species.</title>
        <authorList>
            <person name="Rey M.W."/>
            <person name="Ramaiya P."/>
            <person name="Nelson B.A."/>
            <person name="Brody-Karpin S.D."/>
            <person name="Zaretsky E.J."/>
            <person name="Tang M."/>
            <person name="Lopez de Leon A."/>
            <person name="Xiang H."/>
            <person name="Gusti V."/>
            <person name="Clausen I.G."/>
            <person name="Olsen P.B."/>
            <person name="Rasmussen M.D."/>
            <person name="Andersen J.T."/>
            <person name="Joergensen P.L."/>
            <person name="Larsen T.S."/>
            <person name="Sorokin A."/>
            <person name="Bolotin A."/>
            <person name="Lapidus A."/>
            <person name="Galleron N."/>
            <person name="Ehrlich S.D."/>
            <person name="Berka R.M."/>
        </authorList>
    </citation>
    <scope>NUCLEOTIDE SEQUENCE [LARGE SCALE GENOMIC DNA]</scope>
    <source>
        <strain>ATCC 14580 / DSM 13 / JCM 2505 / CCUG 7422 / NBRC 12200 / NCIMB 9375 / NCTC 10341 / NRRL NRS-1264 / Gibson 46</strain>
    </source>
</reference>
<comment type="similarity">
    <text evidence="1">Belongs to the UPF0736 family.</text>
</comment>
<proteinExistence type="inferred from homology"/>
<keyword id="KW-1185">Reference proteome</keyword>
<protein>
    <recommendedName>
        <fullName evidence="1">UPF0736 protein BLi01230/BL03322</fullName>
    </recommendedName>
</protein>
<organism>
    <name type="scientific">Bacillus licheniformis (strain ATCC 14580 / DSM 13 / JCM 2505 / CCUG 7422 / NBRC 12200 / NCIMB 9375 / NCTC 10341 / NRRL NRS-1264 / Gibson 46)</name>
    <dbReference type="NCBI Taxonomy" id="279010"/>
    <lineage>
        <taxon>Bacteria</taxon>
        <taxon>Bacillati</taxon>
        <taxon>Bacillota</taxon>
        <taxon>Bacilli</taxon>
        <taxon>Bacillales</taxon>
        <taxon>Bacillaceae</taxon>
        <taxon>Bacillus</taxon>
    </lineage>
</organism>
<gene>
    <name type="ordered locus">BLi01230</name>
    <name type="ordered locus">BL03322</name>
</gene>
<evidence type="ECO:0000255" key="1">
    <source>
        <dbReference type="HAMAP-Rule" id="MF_01860"/>
    </source>
</evidence>
<sequence length="250" mass="30018">MLFLHDVWVNWFEGEENGYNVCHFHEWRKEDSVELLDQVPLLRVSSVLFHYIENDLSELPAELLNEVHQKAYIRKNHERTQLDHCFVVTDGIGILAVDTAGYTIPVRKSRLIPRQEQLVYEMVKDVEAETYEFAPEKLQSSKEYHILSLSPEHVRGLTRKERQLKQLLFMALDQLKGLQNRAEIAYWYTEWNPYMYEQIKRMTFEEIWDMLFNETIDGWSDKHRDFCENLIKGQPFFEKLWEIENESKVN</sequence>
<name>Y3322_BACLD</name>
<dbReference type="EMBL" id="CP000002">
    <property type="protein sequence ID" value="AAU22792.2"/>
    <property type="molecule type" value="Genomic_DNA"/>
</dbReference>
<dbReference type="EMBL" id="AE017333">
    <property type="protein sequence ID" value="AAU40138.1"/>
    <property type="molecule type" value="Genomic_DNA"/>
</dbReference>
<dbReference type="RefSeq" id="WP_003180605.1">
    <property type="nucleotide sequence ID" value="NC_006322.1"/>
</dbReference>
<dbReference type="SMR" id="Q65LC6"/>
<dbReference type="STRING" id="279010.BL03322"/>
<dbReference type="KEGG" id="bld:BLi01230"/>
<dbReference type="KEGG" id="bli:BL03322"/>
<dbReference type="eggNOG" id="ENOG502Z8PJ">
    <property type="taxonomic scope" value="Bacteria"/>
</dbReference>
<dbReference type="HOGENOM" id="CLU_1101152_0_0_9"/>
<dbReference type="Proteomes" id="UP000000606">
    <property type="component" value="Chromosome"/>
</dbReference>
<dbReference type="HAMAP" id="MF_01860">
    <property type="entry name" value="UPF0736"/>
    <property type="match status" value="1"/>
</dbReference>
<dbReference type="InterPro" id="IPR020909">
    <property type="entry name" value="UPF0736"/>
</dbReference>
<dbReference type="Pfam" id="PF12227">
    <property type="entry name" value="DUF3603"/>
    <property type="match status" value="1"/>
</dbReference>